<comment type="function">
    <text evidence="1">Catalyzes the phosphorylation of the hydroxyl group of 4-methyl-5-beta-hydroxyethylthiazole (THZ).</text>
</comment>
<comment type="catalytic activity">
    <reaction evidence="1">
        <text>5-(2-hydroxyethyl)-4-methylthiazole + ATP = 4-methyl-5-(2-phosphooxyethyl)-thiazole + ADP + H(+)</text>
        <dbReference type="Rhea" id="RHEA:24212"/>
        <dbReference type="ChEBI" id="CHEBI:15378"/>
        <dbReference type="ChEBI" id="CHEBI:17957"/>
        <dbReference type="ChEBI" id="CHEBI:30616"/>
        <dbReference type="ChEBI" id="CHEBI:58296"/>
        <dbReference type="ChEBI" id="CHEBI:456216"/>
        <dbReference type="EC" id="2.7.1.50"/>
    </reaction>
</comment>
<comment type="cofactor">
    <cofactor evidence="1">
        <name>Mg(2+)</name>
        <dbReference type="ChEBI" id="CHEBI:18420"/>
    </cofactor>
</comment>
<comment type="pathway">
    <text evidence="1">Cofactor biosynthesis; thiamine diphosphate biosynthesis; 4-methyl-5-(2-phosphoethyl)-thiazole from 5-(2-hydroxyethyl)-4-methylthiazole: step 1/1.</text>
</comment>
<comment type="similarity">
    <text evidence="1">Belongs to the Thz kinase family.</text>
</comment>
<feature type="chain" id="PRO_1000100418" description="Hydroxyethylthiazole kinase">
    <location>
        <begin position="1"/>
        <end position="265"/>
    </location>
</feature>
<feature type="binding site" evidence="1">
    <location>
        <position position="50"/>
    </location>
    <ligand>
        <name>substrate</name>
    </ligand>
</feature>
<feature type="binding site" evidence="1">
    <location>
        <position position="125"/>
    </location>
    <ligand>
        <name>ATP</name>
        <dbReference type="ChEBI" id="CHEBI:30616"/>
    </ligand>
</feature>
<feature type="binding site" evidence="1">
    <location>
        <position position="171"/>
    </location>
    <ligand>
        <name>ATP</name>
        <dbReference type="ChEBI" id="CHEBI:30616"/>
    </ligand>
</feature>
<feature type="binding site" evidence="1">
    <location>
        <position position="198"/>
    </location>
    <ligand>
        <name>substrate</name>
    </ligand>
</feature>
<name>THIM_SALA4</name>
<organism>
    <name type="scientific">Salmonella agona (strain SL483)</name>
    <dbReference type="NCBI Taxonomy" id="454166"/>
    <lineage>
        <taxon>Bacteria</taxon>
        <taxon>Pseudomonadati</taxon>
        <taxon>Pseudomonadota</taxon>
        <taxon>Gammaproteobacteria</taxon>
        <taxon>Enterobacterales</taxon>
        <taxon>Enterobacteriaceae</taxon>
        <taxon>Salmonella</taxon>
    </lineage>
</organism>
<reference key="1">
    <citation type="journal article" date="2011" name="J. Bacteriol.">
        <title>Comparative genomics of 28 Salmonella enterica isolates: evidence for CRISPR-mediated adaptive sublineage evolution.</title>
        <authorList>
            <person name="Fricke W.F."/>
            <person name="Mammel M.K."/>
            <person name="McDermott P.F."/>
            <person name="Tartera C."/>
            <person name="White D.G."/>
            <person name="Leclerc J.E."/>
            <person name="Ravel J."/>
            <person name="Cebula T.A."/>
        </authorList>
    </citation>
    <scope>NUCLEOTIDE SEQUENCE [LARGE SCALE GENOMIC DNA]</scope>
    <source>
        <strain>SL483</strain>
    </source>
</reference>
<proteinExistence type="inferred from homology"/>
<sequence>MQPDLHCRTLAAHTLKHFRALSPLTHCMTNDVVQTFTANTLLALGASPAMVIDPVEARPFAAIANALLVNVGTLTASRADAMRGAVESAYDAKTPWTLDPVAVGALEFRRRFCLDLLSLRPAAIRGNASEILALSGMALGGRGVDTTEAALAALPAAQALARQIDCIVVVTGEVDYVTNGQRTLSIPGGDPLMTRIVGTGCALSAVVAASCALPGAALDNVASACCWMKLAGQAAAERSEGPGSFIPAFLDALYHLDVEAANATN</sequence>
<keyword id="KW-0067">ATP-binding</keyword>
<keyword id="KW-0418">Kinase</keyword>
<keyword id="KW-0460">Magnesium</keyword>
<keyword id="KW-0479">Metal-binding</keyword>
<keyword id="KW-0547">Nucleotide-binding</keyword>
<keyword id="KW-0784">Thiamine biosynthesis</keyword>
<keyword id="KW-0808">Transferase</keyword>
<accession>B5EXY6</accession>
<dbReference type="EC" id="2.7.1.50" evidence="1"/>
<dbReference type="EMBL" id="CP001138">
    <property type="protein sequence ID" value="ACH50094.1"/>
    <property type="molecule type" value="Genomic_DNA"/>
</dbReference>
<dbReference type="RefSeq" id="WP_001182167.1">
    <property type="nucleotide sequence ID" value="NC_011149.1"/>
</dbReference>
<dbReference type="SMR" id="B5EXY6"/>
<dbReference type="KEGG" id="sea:SeAg_B2290"/>
<dbReference type="HOGENOM" id="CLU_019943_0_1_6"/>
<dbReference type="UniPathway" id="UPA00060">
    <property type="reaction ID" value="UER00139"/>
</dbReference>
<dbReference type="Proteomes" id="UP000008819">
    <property type="component" value="Chromosome"/>
</dbReference>
<dbReference type="GO" id="GO:0005524">
    <property type="term" value="F:ATP binding"/>
    <property type="evidence" value="ECO:0007669"/>
    <property type="project" value="UniProtKB-UniRule"/>
</dbReference>
<dbReference type="GO" id="GO:0004417">
    <property type="term" value="F:hydroxyethylthiazole kinase activity"/>
    <property type="evidence" value="ECO:0007669"/>
    <property type="project" value="UniProtKB-UniRule"/>
</dbReference>
<dbReference type="GO" id="GO:0000287">
    <property type="term" value="F:magnesium ion binding"/>
    <property type="evidence" value="ECO:0007669"/>
    <property type="project" value="UniProtKB-UniRule"/>
</dbReference>
<dbReference type="GO" id="GO:0009228">
    <property type="term" value="P:thiamine biosynthetic process"/>
    <property type="evidence" value="ECO:0007669"/>
    <property type="project" value="UniProtKB-KW"/>
</dbReference>
<dbReference type="GO" id="GO:0009229">
    <property type="term" value="P:thiamine diphosphate biosynthetic process"/>
    <property type="evidence" value="ECO:0007669"/>
    <property type="project" value="UniProtKB-UniRule"/>
</dbReference>
<dbReference type="CDD" id="cd01170">
    <property type="entry name" value="THZ_kinase"/>
    <property type="match status" value="1"/>
</dbReference>
<dbReference type="FunFam" id="3.40.1190.20:FF:000015">
    <property type="entry name" value="Hydroxyethylthiazole kinase"/>
    <property type="match status" value="1"/>
</dbReference>
<dbReference type="Gene3D" id="3.40.1190.20">
    <property type="match status" value="1"/>
</dbReference>
<dbReference type="HAMAP" id="MF_00228">
    <property type="entry name" value="Thz_kinase"/>
    <property type="match status" value="1"/>
</dbReference>
<dbReference type="InterPro" id="IPR000417">
    <property type="entry name" value="Hyethyz_kinase"/>
</dbReference>
<dbReference type="InterPro" id="IPR029056">
    <property type="entry name" value="Ribokinase-like"/>
</dbReference>
<dbReference type="NCBIfam" id="NF006830">
    <property type="entry name" value="PRK09355.1"/>
    <property type="match status" value="1"/>
</dbReference>
<dbReference type="NCBIfam" id="TIGR00694">
    <property type="entry name" value="thiM"/>
    <property type="match status" value="1"/>
</dbReference>
<dbReference type="Pfam" id="PF02110">
    <property type="entry name" value="HK"/>
    <property type="match status" value="1"/>
</dbReference>
<dbReference type="PIRSF" id="PIRSF000513">
    <property type="entry name" value="Thz_kinase"/>
    <property type="match status" value="1"/>
</dbReference>
<dbReference type="PRINTS" id="PR01099">
    <property type="entry name" value="HYETHTZKNASE"/>
</dbReference>
<dbReference type="SUPFAM" id="SSF53613">
    <property type="entry name" value="Ribokinase-like"/>
    <property type="match status" value="1"/>
</dbReference>
<evidence type="ECO:0000255" key="1">
    <source>
        <dbReference type="HAMAP-Rule" id="MF_00228"/>
    </source>
</evidence>
<gene>
    <name evidence="1" type="primary">thiM</name>
    <name type="ordered locus">SeAg_B2290</name>
</gene>
<protein>
    <recommendedName>
        <fullName evidence="1">Hydroxyethylthiazole kinase</fullName>
        <ecNumber evidence="1">2.7.1.50</ecNumber>
    </recommendedName>
    <alternativeName>
        <fullName evidence="1">4-methyl-5-beta-hydroxyethylthiazole kinase</fullName>
        <shortName evidence="1">TH kinase</shortName>
        <shortName evidence="1">Thz kinase</shortName>
    </alternativeName>
</protein>